<organism evidence="12">
    <name type="scientific">Arabidopsis thaliana</name>
    <name type="common">Mouse-ear cress</name>
    <dbReference type="NCBI Taxonomy" id="3702"/>
    <lineage>
        <taxon>Eukaryota</taxon>
        <taxon>Viridiplantae</taxon>
        <taxon>Streptophyta</taxon>
        <taxon>Embryophyta</taxon>
        <taxon>Tracheophyta</taxon>
        <taxon>Spermatophyta</taxon>
        <taxon>Magnoliopsida</taxon>
        <taxon>eudicotyledons</taxon>
        <taxon>Gunneridae</taxon>
        <taxon>Pentapetalae</taxon>
        <taxon>rosids</taxon>
        <taxon>malvids</taxon>
        <taxon>Brassicales</taxon>
        <taxon>Brassicaceae</taxon>
        <taxon>Camelineae</taxon>
        <taxon>Arabidopsis</taxon>
    </lineage>
</organism>
<reference key="1">
    <citation type="journal article" date="2000" name="Nature">
        <title>Sequence and analysis of chromosome 1 of the plant Arabidopsis thaliana.</title>
        <authorList>
            <person name="Theologis A."/>
            <person name="Ecker J.R."/>
            <person name="Palm C.J."/>
            <person name="Federspiel N.A."/>
            <person name="Kaul S."/>
            <person name="White O."/>
            <person name="Alonso J."/>
            <person name="Altafi H."/>
            <person name="Araujo R."/>
            <person name="Bowman C.L."/>
            <person name="Brooks S.Y."/>
            <person name="Buehler E."/>
            <person name="Chan A."/>
            <person name="Chao Q."/>
            <person name="Chen H."/>
            <person name="Cheuk R.F."/>
            <person name="Chin C.W."/>
            <person name="Chung M.K."/>
            <person name="Conn L."/>
            <person name="Conway A.B."/>
            <person name="Conway A.R."/>
            <person name="Creasy T.H."/>
            <person name="Dewar K."/>
            <person name="Dunn P."/>
            <person name="Etgu P."/>
            <person name="Feldblyum T.V."/>
            <person name="Feng J.-D."/>
            <person name="Fong B."/>
            <person name="Fujii C.Y."/>
            <person name="Gill J.E."/>
            <person name="Goldsmith A.D."/>
            <person name="Haas B."/>
            <person name="Hansen N.F."/>
            <person name="Hughes B."/>
            <person name="Huizar L."/>
            <person name="Hunter J.L."/>
            <person name="Jenkins J."/>
            <person name="Johnson-Hopson C."/>
            <person name="Khan S."/>
            <person name="Khaykin E."/>
            <person name="Kim C.J."/>
            <person name="Koo H.L."/>
            <person name="Kremenetskaia I."/>
            <person name="Kurtz D.B."/>
            <person name="Kwan A."/>
            <person name="Lam B."/>
            <person name="Langin-Hooper S."/>
            <person name="Lee A."/>
            <person name="Lee J.M."/>
            <person name="Lenz C.A."/>
            <person name="Li J.H."/>
            <person name="Li Y.-P."/>
            <person name="Lin X."/>
            <person name="Liu S.X."/>
            <person name="Liu Z.A."/>
            <person name="Luros J.S."/>
            <person name="Maiti R."/>
            <person name="Marziali A."/>
            <person name="Militscher J."/>
            <person name="Miranda M."/>
            <person name="Nguyen M."/>
            <person name="Nierman W.C."/>
            <person name="Osborne B.I."/>
            <person name="Pai G."/>
            <person name="Peterson J."/>
            <person name="Pham P.K."/>
            <person name="Rizzo M."/>
            <person name="Rooney T."/>
            <person name="Rowley D."/>
            <person name="Sakano H."/>
            <person name="Salzberg S.L."/>
            <person name="Schwartz J.R."/>
            <person name="Shinn P."/>
            <person name="Southwick A.M."/>
            <person name="Sun H."/>
            <person name="Tallon L.J."/>
            <person name="Tambunga G."/>
            <person name="Toriumi M.J."/>
            <person name="Town C.D."/>
            <person name="Utterback T."/>
            <person name="Van Aken S."/>
            <person name="Vaysberg M."/>
            <person name="Vysotskaia V.S."/>
            <person name="Walker M."/>
            <person name="Wu D."/>
            <person name="Yu G."/>
            <person name="Fraser C.M."/>
            <person name="Venter J.C."/>
            <person name="Davis R.W."/>
        </authorList>
    </citation>
    <scope>NUCLEOTIDE SEQUENCE [LARGE SCALE GENOMIC DNA]</scope>
    <source>
        <strain>cv. Columbia</strain>
    </source>
</reference>
<reference key="2">
    <citation type="journal article" date="2017" name="Plant J.">
        <title>Araport11: a complete reannotation of the Arabidopsis thaliana reference genome.</title>
        <authorList>
            <person name="Cheng C.Y."/>
            <person name="Krishnakumar V."/>
            <person name="Chan A.P."/>
            <person name="Thibaud-Nissen F."/>
            <person name="Schobel S."/>
            <person name="Town C.D."/>
        </authorList>
    </citation>
    <scope>GENOME REANNOTATION</scope>
    <source>
        <strain>cv. Columbia</strain>
    </source>
</reference>
<reference key="3">
    <citation type="journal article" date="2007" name="Genome Biol.">
        <title>Genetic subtraction profiling identifies genes essential for Arabidopsis reproduction and reveals interaction between the female gametophyte and the maternal sporophyte.</title>
        <authorList>
            <person name="Johnston A.J."/>
            <person name="Meier P."/>
            <person name="Gheyselinck J."/>
            <person name="Wuest S.E.J."/>
            <person name="Federer M."/>
            <person name="Schlagenhauf E."/>
            <person name="Becker J.D."/>
            <person name="Grossniklaus U."/>
        </authorList>
    </citation>
    <scope>FUNCTION</scope>
</reference>
<reference key="4">
    <citation type="journal article" date="2008" name="J. Proteome Res.">
        <title>Site-specific phosphorylation profiling of Arabidopsis proteins by mass spectrometry and peptide chip analysis.</title>
        <authorList>
            <person name="de la Fuente van Bentem S."/>
            <person name="Anrather D."/>
            <person name="Dohnal I."/>
            <person name="Roitinger E."/>
            <person name="Csaszar E."/>
            <person name="Joore J."/>
            <person name="Buijnink J."/>
            <person name="Carreri A."/>
            <person name="Forzani C."/>
            <person name="Lorkovic Z.J."/>
            <person name="Barta A."/>
            <person name="Lecourieux D."/>
            <person name="Verhounig A."/>
            <person name="Jonak C."/>
            <person name="Hirt H."/>
        </authorList>
    </citation>
    <scope>PHOSPHORYLATION [LARGE SCALE ANALYSIS] AT SER-1887</scope>
    <scope>IDENTIFICATION BY MASS SPECTROMETRY [LARGE SCALE ANALYSIS]</scope>
    <source>
        <tissue>Root</tissue>
    </source>
</reference>
<reference key="5">
    <citation type="journal article" date="2009" name="J. Proteomics">
        <title>Phosphoproteomic analysis of nuclei-enriched fractions from Arabidopsis thaliana.</title>
        <authorList>
            <person name="Jones A.M.E."/>
            <person name="MacLean D."/>
            <person name="Studholme D.J."/>
            <person name="Serna-Sanz A."/>
            <person name="Andreasson E."/>
            <person name="Rathjen J.P."/>
            <person name="Peck S.C."/>
        </authorList>
    </citation>
    <scope>PHOSPHORYLATION [LARGE SCALE ANALYSIS] AT SER-1887</scope>
    <scope>IDENTIFICATION BY MASS SPECTROMETRY [LARGE SCALE ANALYSIS]</scope>
    <source>
        <strain>cv. Columbia</strain>
    </source>
</reference>
<reference key="6">
    <citation type="journal article" date="2009" name="Plant Physiol.">
        <title>Large-scale Arabidopsis phosphoproteome profiling reveals novel chloroplast kinase substrates and phosphorylation networks.</title>
        <authorList>
            <person name="Reiland S."/>
            <person name="Messerli G."/>
            <person name="Baerenfaller K."/>
            <person name="Gerrits B."/>
            <person name="Endler A."/>
            <person name="Grossmann J."/>
            <person name="Gruissem W."/>
            <person name="Baginsky S."/>
        </authorList>
    </citation>
    <scope>PHOSPHORYLATION [LARGE SCALE ANALYSIS] AT SER-1887</scope>
    <scope>IDENTIFICATION BY MASS SPECTROMETRY [LARGE SCALE ANALYSIS]</scope>
</reference>
<reference key="7">
    <citation type="journal article" date="2010" name="Plant Cell Physiol.">
        <title>The HEAT repeat protein ILITYHIA is required for plant immunity.</title>
        <authorList>
            <person name="Monaghan J."/>
            <person name="Li X."/>
        </authorList>
    </citation>
    <scope>FUNCTION</scope>
    <scope>DISRUPTION PHENOTYPE</scope>
    <scope>LACK OF INDUCTION BY PATHOGEN</scope>
</reference>
<reference key="8">
    <citation type="journal article" date="2011" name="PLoS Pathog.">
        <title>A genetic screen reveals Arabidopsis stomatal and/or apoplastic defenses against Pseudomonas syringae pv. tomato DC3000.</title>
        <authorList>
            <person name="Zeng W."/>
            <person name="Brutus A."/>
            <person name="Kremer J.M."/>
            <person name="Withers J.C."/>
            <person name="Gao X."/>
            <person name="Jones A.D."/>
            <person name="He S.Y."/>
        </authorList>
    </citation>
    <scope>FUNCTION</scope>
</reference>
<evidence type="ECO:0000255" key="1"/>
<evidence type="ECO:0000256" key="2">
    <source>
        <dbReference type="SAM" id="MobiDB-lite"/>
    </source>
</evidence>
<evidence type="ECO:0000269" key="3">
    <source>
    </source>
</evidence>
<evidence type="ECO:0000269" key="4">
    <source>
    </source>
</evidence>
<evidence type="ECO:0000269" key="5">
    <source>
    </source>
</evidence>
<evidence type="ECO:0000305" key="6"/>
<evidence type="ECO:0000305" key="7">
    <source>
    </source>
</evidence>
<evidence type="ECO:0000305" key="8">
    <source>
    </source>
</evidence>
<evidence type="ECO:0000312" key="9">
    <source>
        <dbReference type="Araport" id="AT1G64790"/>
    </source>
</evidence>
<evidence type="ECO:0000312" key="10">
    <source>
        <dbReference type="EMBL" id="AAD38254.1"/>
    </source>
</evidence>
<evidence type="ECO:0000312" key="11">
    <source>
        <dbReference type="EMBL" id="AEE34290.1"/>
    </source>
</evidence>
<evidence type="ECO:0000312" key="12">
    <source>
        <dbReference type="Proteomes" id="UP000006548"/>
    </source>
</evidence>
<evidence type="ECO:0007744" key="13">
    <source>
    </source>
</evidence>
<evidence type="ECO:0007744" key="14">
    <source>
    </source>
</evidence>
<evidence type="ECO:0007744" key="15">
    <source>
    </source>
</evidence>
<sequence length="2696" mass="294075">MSYSMVNASSAVSSPETAKNSDEPPPISSEAVNVLFPSVDPNSKLFRNSLNITISREAPPLTTSRIDFLSLFIFCKLTHWLSLNPSSHRDEEEEEASPFYPFTIVLTYQPGPGQSPWKEMASPLESLLSISGSVSTSSTLIRLRIFRHDIPEILQNSDMTSDIAPVIVDMIFQTLAIYDDRASRKAVDDLIVKGLGNVTFMKTFAAMLVQVMEKQLKFCFDTVCYRLLIWSCLLLEKSQFATVSKNAFVRVASTQASLLRIIMESSFRMRRACKRFMFHLFSQSQAIYSLYMDEVKGSRIPYKDSPELLGLLLEFSCSSPALFEQSKAIFVDIYVKDVLNSREKQKPNLSNCFKPLLQRLSHEEFQTVILPAAVKMLKRNPEIVLESVGFLLANVNIDLSKYALELLPVILPQARHTDEDRRLGALSMVMCLSEKSSNPDTIEAMFASVKAIIGGSEGRLQSPHQRIGMLNAVQELASAPEGKYIGSLSRTICSFLIACYKDEGNEDVKLSILSAVASWASRSSVAIQPNLVSFIAAGLKEKEALRRGHLRCVRIICRNPDTISQISDLLSPLIQLVKTGFTKAVQRLDGIYALLIVSKIAACDIKAEDTMVKEKLWTLISQNEPSLVQITLASKLSSDDCVVCVDLLEVLLVEHSSRVLEAFSLKSLSQLLLFLLCHPSWNVRKTAYNSVTKIFLATSQLATTLLDEFSDFLSITGDQIVSSRTSDADNPADHQAPFVPSVEVLVKALIVISSAAVAGPPSSWIVRAIFCSHHPSIVGTGKRDAVWKRLQKCLKTCGFDVATFLSTNGESVCKSLLGPMGLTSAKTPEQQAAVYSLSTMMSLAPEDTFTVFKMHLQDLPDRLSHDMLSETDIKIFHTPEGMLLSEQGVYVAQTIGAKYTKQEPSSNHSLKKGLASRETANSGRRDTAKLTKKADKGKTAKEEARELMLKEEASTRENVHRIQKSLSLVLHALGEMGLANPVFCHSQLPFLATFLDPLLRSPIVSAAAFENLVKLARCTVQPLCNWALEISTALRLIAIDEVDTSFDFRPSVDKAGKTYEGLFERIVNGLSISCKSGPLPVDTFTFIFPVLYHVLGVVPAYQASVGPALNELCLGLQADDVANALYGVYSKDVHVRLACLNAVKCIPAVSKCSLPQNVKIATNIWIALHDPEKSVAESADDLWARYGHDLGTDYSGIFKALSHINLNVRLAAAEALADALHESPSSIQLSLSTLFSLYIRDATSGEDVFDAGWIGRQGIALALQSAADVLTTKDLPAVMTFLISRALADPNTDVRGKMINAGIMIIDKHGKENVSLLFPIFENYLNKEASDEEEYDLVREGVVIFTGALAKHLARDDPKVHNVVEKLLEVLNTPSESVQRAVSTCLSPLVLSKQEEAPALFLRLLDKLMKSDKYGERRGAAFGLAGVVMGFGISSLKKYGLIVTLQEALIDRNSAKRREGALLAFECLCEKLGKLFEPYVIKMLPLLLVSFSDQVGAVREAAECAARAMMSQLSAYGVKLVLPSLLKGLEDKAWRTKQSSVQLLGAMAFCAPQQLSQCLPRVVPKLTEVFKTIQVLTDTHPKVQSAGQLALQQVGSVIKNPEISSLVPTLLLALTDPNEYTRHALDTLLQTTFVNSVDAPSLALLVPIVHRGLRERSSETKKKASQIVGNMCSLVTEPKDMIPYIGLLLPEVKKVLVDPIPEVRSVAARAVGSLIRGMGEDNFPDLVPWLFETLKSDTSNVERYGAAQGLSEVIAALGTDYFENILPDLIRHCSHQKASVRDGYLTLFKFLPRSLGAQFQKYLQLVLPAILDGLADENESVRDAALGAGHVLVEHHATTSLPLLLPAVEDGIFNDNWRIRQSSVELLGDLLFKVAGTSGKALLEGGSDDEGASTEAQGRAIIDILGMDKRNEVLAALYMVRTDVSLSVRQAALHVWKTIVANTPKTLKEIMPILMSTLISSLASPSSERRQVAGRSLGELVRKLGERVLPLIIPILSKGLKDPDVDKRQGVCIGLNEVMASAGRSQLLSFMDQLIPTIRTALCDSALEVRESAGLAFSTLYKSAGLQAMDEIIPTLLEALEDDEMSTTALDGLKQIISVRTAAVLPHILPKLVHLPLSALNAHALGALAEVAGAGFNTHLGTILPALLSAMGGENKEVQELAQEAAERVVLVIDEEGVETLLSELLKGVSDSQASIRRSSAYLIGYFFKSSKLYLIDEAPNMISTLIVMLSDSDSTTVAVSWEALARVIGSVPKEVLPSYIKLVRDAVSTARDKERRKRKGGYVVIPGLCLPKSLKPLLPVFLQGLISGSAELREQAAIGLGELIEVTSEQALKEFVIPITGPLIRIIGDRFPWQVKSAILATLIILIQRGGMALKPFLPQLQTTFVKCLQDSTRTIRSSAAVALGKLSALSTRIDPLVGDLMTSFQAADSGVREAILSAMRGVIKHAGKSIGPAVRVRIFDLLKDLMHHEDDQVRISATSMLGVLSQYLEAAQLSVLLQEVNDLSASQNWGARHGSVLCISSLLKHNPSTIMTSSLFSSMLNSLKSSLKDEKFPLRESSTKALGRLLLKQLATDPSNTKVVIDVLSSIVSALHDDSSEVRRRALSSLKAFAKDNPSATMANISVIGPPLAECLKDGNTPVRLAAERCALHVFQLTKGAENVQAAQKYITGLDARRLSKFPEQSDDSESDDDNVSG</sequence>
<keyword id="KW-0025">Alternative splicing</keyword>
<keyword id="KW-0597">Phosphoprotein</keyword>
<keyword id="KW-1185">Reference proteome</keyword>
<keyword id="KW-0677">Repeat</keyword>
<gene>
    <name evidence="11" type="primary">ILA</name>
    <name evidence="9" type="ordered locus">At1g64790</name>
    <name evidence="10" type="ORF">F13O11.10</name>
</gene>
<accession>F4I893</accession>
<accession>F4I894</accession>
<accession>Q9XIR5</accession>
<name>ILA_ARATH</name>
<proteinExistence type="evidence at protein level"/>
<comment type="function">
    <text evidence="3 4 5">Involved in immunity against bacterial infection and in non-host resistance (PubMed:20360018). Required for embryo development (PubMed:17915010). Required for systemic acquired resistance, but functions in an salicylic acid-independent manner (PubMed:20360018). Required for bacterium-triggered stomatal closure response (PubMed:21998587).</text>
</comment>
<comment type="alternative products">
    <event type="alternative splicing"/>
    <isoform>
        <id>F4I893-1</id>
        <name>1</name>
        <sequence type="displayed"/>
    </isoform>
    <isoform>
        <id>F4I893-2</id>
        <name>2</name>
        <sequence type="described" ref="VSP_058640 VSP_058641 VSP_058642"/>
    </isoform>
</comment>
<comment type="induction">
    <text evidence="4">Not up-regulated by pathogen infection.</text>
</comment>
<comment type="disruption phenotype">
    <text evidence="4">Reduced growth, pale or yellow leaves, frequent enations and pollen defect resulting in sterility. Enhanced susceptibility to bacterial infection.</text>
</comment>
<comment type="miscellaneous">
    <text evidence="7">This protein was called 'ILITYHIA' after the Greek goddess of childbirth.</text>
</comment>
<comment type="miscellaneous">
    <text evidence="8">Unlike other GCN1 homologs, ILA is not a component of the MOS4-associated complex (MSC), a protein complex with homology to the nineteen complex (NTC) in yeast and human.</text>
</comment>
<comment type="similarity">
    <text evidence="6">Belongs to the GCN1 family.</text>
</comment>
<comment type="sequence caution" evidence="6">
    <conflict type="erroneous gene model prediction">
        <sequence resource="EMBL-CDS" id="AAD38254"/>
    </conflict>
</comment>
<dbReference type="EMBL" id="AC006193">
    <property type="protein sequence ID" value="AAD38254.1"/>
    <property type="status" value="ALT_SEQ"/>
    <property type="molecule type" value="Genomic_DNA"/>
</dbReference>
<dbReference type="EMBL" id="CP002684">
    <property type="protein sequence ID" value="AEE34289.1"/>
    <property type="molecule type" value="Genomic_DNA"/>
</dbReference>
<dbReference type="EMBL" id="CP002684">
    <property type="protein sequence ID" value="AEE34290.1"/>
    <property type="molecule type" value="Genomic_DNA"/>
</dbReference>
<dbReference type="PIR" id="B96671">
    <property type="entry name" value="B96671"/>
</dbReference>
<dbReference type="RefSeq" id="NP_001185313.1">
    <molecule id="F4I893-1"/>
    <property type="nucleotide sequence ID" value="NM_001198384.1"/>
</dbReference>
<dbReference type="RefSeq" id="NP_176659.6">
    <molecule id="F4I893-2"/>
    <property type="nucleotide sequence ID" value="NM_105153.8"/>
</dbReference>
<dbReference type="FunCoup" id="F4I893">
    <property type="interactions" value="4378"/>
</dbReference>
<dbReference type="STRING" id="3702.F4I893"/>
<dbReference type="iPTMnet" id="F4I893"/>
<dbReference type="PaxDb" id="3702-AT1G64790.2"/>
<dbReference type="ProteomicsDB" id="250651">
    <molecule id="F4I893-1"/>
</dbReference>
<dbReference type="EnsemblPlants" id="AT1G64790.1">
    <molecule id="F4I893-2"/>
    <property type="protein sequence ID" value="AT1G64790.1"/>
    <property type="gene ID" value="AT1G64790"/>
</dbReference>
<dbReference type="EnsemblPlants" id="AT1G64790.2">
    <molecule id="F4I893-1"/>
    <property type="protein sequence ID" value="AT1G64790.2"/>
    <property type="gene ID" value="AT1G64790"/>
</dbReference>
<dbReference type="GeneID" id="842787"/>
<dbReference type="Gramene" id="AT1G64790.1">
    <molecule id="F4I893-2"/>
    <property type="protein sequence ID" value="AT1G64790.1"/>
    <property type="gene ID" value="AT1G64790"/>
</dbReference>
<dbReference type="Gramene" id="AT1G64790.2">
    <molecule id="F4I893-1"/>
    <property type="protein sequence ID" value="AT1G64790.2"/>
    <property type="gene ID" value="AT1G64790"/>
</dbReference>
<dbReference type="KEGG" id="ath:AT1G64790"/>
<dbReference type="Araport" id="AT1G64790"/>
<dbReference type="TAIR" id="AT1G64790">
    <property type="gene designation" value="ILA"/>
</dbReference>
<dbReference type="eggNOG" id="KOG1242">
    <property type="taxonomic scope" value="Eukaryota"/>
</dbReference>
<dbReference type="HOGENOM" id="CLU_000504_2_0_1"/>
<dbReference type="InParanoid" id="F4I893"/>
<dbReference type="OMA" id="FLFTNWL"/>
<dbReference type="CD-CODE" id="4299E36E">
    <property type="entry name" value="Nucleolus"/>
</dbReference>
<dbReference type="PRO" id="PR:F4I893"/>
<dbReference type="Proteomes" id="UP000006548">
    <property type="component" value="Chromosome 1"/>
</dbReference>
<dbReference type="ExpressionAtlas" id="F4I893">
    <property type="expression patterns" value="baseline and differential"/>
</dbReference>
<dbReference type="GO" id="GO:0005634">
    <property type="term" value="C:nucleus"/>
    <property type="evidence" value="ECO:0007005"/>
    <property type="project" value="TAIR"/>
</dbReference>
<dbReference type="GO" id="GO:0042742">
    <property type="term" value="P:defense response to bacterium"/>
    <property type="evidence" value="ECO:0000315"/>
    <property type="project" value="UniProtKB"/>
</dbReference>
<dbReference type="GO" id="GO:0009682">
    <property type="term" value="P:induced systemic resistance"/>
    <property type="evidence" value="ECO:0000315"/>
    <property type="project" value="UniProtKB"/>
</dbReference>
<dbReference type="GO" id="GO:0045087">
    <property type="term" value="P:innate immune response"/>
    <property type="evidence" value="ECO:0000315"/>
    <property type="project" value="UniProtKB"/>
</dbReference>
<dbReference type="GO" id="GO:0009627">
    <property type="term" value="P:systemic acquired resistance"/>
    <property type="evidence" value="ECO:0000315"/>
    <property type="project" value="TAIR"/>
</dbReference>
<dbReference type="FunFam" id="1.25.10.10:FF:000090">
    <property type="entry name" value="eIF-2-alpha kinase activator GCN1"/>
    <property type="match status" value="1"/>
</dbReference>
<dbReference type="FunFam" id="1.25.10.10:FF:000096">
    <property type="entry name" value="eIF-2-alpha kinase activator gcn1"/>
    <property type="match status" value="1"/>
</dbReference>
<dbReference type="FunFam" id="1.25.10.10:FF:000162">
    <property type="entry name" value="GCN1, eIF2 alpha kinase activator homolog"/>
    <property type="match status" value="1"/>
</dbReference>
<dbReference type="FunFam" id="1.25.10.10:FF:002049">
    <property type="entry name" value="Translational activator GCN1"/>
    <property type="match status" value="1"/>
</dbReference>
<dbReference type="Gene3D" id="1.25.10.10">
    <property type="entry name" value="Leucine-rich Repeat Variant"/>
    <property type="match status" value="8"/>
</dbReference>
<dbReference type="InterPro" id="IPR011989">
    <property type="entry name" value="ARM-like"/>
</dbReference>
<dbReference type="InterPro" id="IPR016024">
    <property type="entry name" value="ARM-type_fold"/>
</dbReference>
<dbReference type="InterPro" id="IPR056810">
    <property type="entry name" value="GNC1-like_N"/>
</dbReference>
<dbReference type="InterPro" id="IPR021133">
    <property type="entry name" value="HEAT_type_2"/>
</dbReference>
<dbReference type="InterPro" id="IPR034085">
    <property type="entry name" value="TOG"/>
</dbReference>
<dbReference type="PANTHER" id="PTHR23346:SF7">
    <property type="entry name" value="STALLED RIBOSOME SENSOR GCN1"/>
    <property type="match status" value="1"/>
</dbReference>
<dbReference type="PANTHER" id="PTHR23346">
    <property type="entry name" value="TRANSLATIONAL ACTIVATOR GCN1-RELATED"/>
    <property type="match status" value="1"/>
</dbReference>
<dbReference type="Pfam" id="PF24993">
    <property type="entry name" value="GNC1_N"/>
    <property type="match status" value="1"/>
</dbReference>
<dbReference type="Pfam" id="PF24984">
    <property type="entry name" value="HEAT_EF3_GNC1"/>
    <property type="match status" value="1"/>
</dbReference>
<dbReference type="Pfam" id="PF24987">
    <property type="entry name" value="HEAT_EF3_N"/>
    <property type="match status" value="2"/>
</dbReference>
<dbReference type="Pfam" id="PF23271">
    <property type="entry name" value="HEAT_GCN1"/>
    <property type="match status" value="1"/>
</dbReference>
<dbReference type="SMART" id="SM01349">
    <property type="entry name" value="TOG"/>
    <property type="match status" value="3"/>
</dbReference>
<dbReference type="SUPFAM" id="SSF48371">
    <property type="entry name" value="ARM repeat"/>
    <property type="match status" value="4"/>
</dbReference>
<dbReference type="PROSITE" id="PS50077">
    <property type="entry name" value="HEAT_REPEAT"/>
    <property type="match status" value="3"/>
</dbReference>
<feature type="chain" id="PRO_0000438304" description="Protein ILITYHIA">
    <location>
        <begin position="1"/>
        <end position="2696"/>
    </location>
</feature>
<feature type="repeat" description="HEAT 1" evidence="1">
    <location>
        <begin position="162"/>
        <end position="204"/>
    </location>
</feature>
<feature type="repeat" description="HEAT 2" evidence="1">
    <location>
        <begin position="253"/>
        <end position="290"/>
    </location>
</feature>
<feature type="repeat" description="HEAT 3" evidence="1">
    <location>
        <begin position="303"/>
        <end position="340"/>
    </location>
</feature>
<feature type="repeat" description="HEAT 4" evidence="1">
    <location>
        <begin position="364"/>
        <end position="400"/>
    </location>
</feature>
<feature type="repeat" description="HEAT 5" evidence="1">
    <location>
        <begin position="401"/>
        <end position="438"/>
    </location>
</feature>
<feature type="repeat" description="HEAT 6" evidence="1">
    <location>
        <begin position="487"/>
        <end position="525"/>
    </location>
</feature>
<feature type="repeat" description="HEAT 7" evidence="1">
    <location>
        <begin position="526"/>
        <end position="562"/>
    </location>
</feature>
<feature type="repeat" description="HEAT 8" evidence="1">
    <location>
        <begin position="564"/>
        <end position="601"/>
    </location>
</feature>
<feature type="repeat" description="HEAT 9" evidence="1">
    <location>
        <begin position="642"/>
        <end position="677"/>
    </location>
</feature>
<feature type="repeat" description="HEAT 10" evidence="1">
    <location>
        <begin position="985"/>
        <end position="1021"/>
    </location>
</feature>
<feature type="repeat" description="HEAT 11" evidence="1">
    <location>
        <begin position="1082"/>
        <end position="1118"/>
    </location>
</feature>
<feature type="repeat" description="HEAT 12" evidence="1">
    <location>
        <begin position="1188"/>
        <end position="1225"/>
    </location>
</feature>
<feature type="repeat" description="HEAT 13" evidence="1">
    <location>
        <begin position="1273"/>
        <end position="1311"/>
    </location>
</feature>
<feature type="repeat" description="HEAT 14" evidence="1">
    <location>
        <begin position="1315"/>
        <end position="1355"/>
    </location>
</feature>
<feature type="repeat" description="HEAT 15" evidence="1">
    <location>
        <begin position="1358"/>
        <end position="1395"/>
    </location>
</feature>
<feature type="repeat" description="HEAT 16" evidence="1">
    <location>
        <begin position="1397"/>
        <end position="1433"/>
    </location>
</feature>
<feature type="repeat" description="HEAT 17" evidence="1">
    <location>
        <begin position="1436"/>
        <end position="1474"/>
    </location>
</feature>
<feature type="repeat" description="HEAT 18" evidence="1">
    <location>
        <begin position="1478"/>
        <end position="1515"/>
    </location>
</feature>
<feature type="repeat" description="HEAT 19" evidence="1">
    <location>
        <begin position="1516"/>
        <end position="1553"/>
    </location>
</feature>
<feature type="repeat" description="HEAT 20" evidence="1">
    <location>
        <begin position="1564"/>
        <end position="1600"/>
    </location>
</feature>
<feature type="repeat" description="HEAT 21" evidence="1">
    <location>
        <begin position="1601"/>
        <end position="1638"/>
    </location>
</feature>
<feature type="repeat" description="HEAT 22" evidence="1">
    <location>
        <begin position="1640"/>
        <end position="1677"/>
    </location>
</feature>
<feature type="repeat" description="HEAT 23" evidence="1">
    <location>
        <begin position="1683"/>
        <end position="1720"/>
    </location>
</feature>
<feature type="repeat" description="HEAT 24" evidence="1">
    <location>
        <begin position="1722"/>
        <end position="1759"/>
    </location>
</feature>
<feature type="repeat" description="HEAT 25" evidence="1">
    <location>
        <begin position="1761"/>
        <end position="1797"/>
    </location>
</feature>
<feature type="repeat" description="HEAT 26" evidence="1">
    <location>
        <begin position="1801"/>
        <end position="1838"/>
    </location>
</feature>
<feature type="repeat" description="HEAT 27" evidence="1">
    <location>
        <begin position="1840"/>
        <end position="1876"/>
    </location>
</feature>
<feature type="repeat" description="HEAT 28" evidence="1">
    <location>
        <begin position="1908"/>
        <end position="1945"/>
    </location>
</feature>
<feature type="repeat" description="HEAT 29" evidence="1">
    <location>
        <begin position="1949"/>
        <end position="1986"/>
    </location>
</feature>
<feature type="repeat" description="HEAT 30" evidence="1">
    <location>
        <begin position="1988"/>
        <end position="2024"/>
    </location>
</feature>
<feature type="repeat" description="HEAT 31" evidence="1">
    <location>
        <begin position="2029"/>
        <end position="2066"/>
    </location>
</feature>
<feature type="repeat" description="HEAT 32" evidence="1">
    <location>
        <begin position="2067"/>
        <end position="2102"/>
    </location>
</feature>
<feature type="repeat" description="HEAT 33" evidence="1">
    <location>
        <begin position="2104"/>
        <end position="2137"/>
    </location>
</feature>
<feature type="repeat" description="HEAT 34" evidence="1">
    <location>
        <begin position="2138"/>
        <end position="2175"/>
    </location>
</feature>
<feature type="repeat" description="HEAT 35" evidence="1">
    <location>
        <begin position="2177"/>
        <end position="2213"/>
    </location>
</feature>
<feature type="repeat" description="HEAT 36" evidence="1">
    <location>
        <begin position="2217"/>
        <end position="2254"/>
    </location>
</feature>
<feature type="repeat" description="HEAT 37" evidence="1">
    <location>
        <begin position="2258"/>
        <end position="2292"/>
    </location>
</feature>
<feature type="repeat" description="HEAT 38" evidence="1">
    <location>
        <begin position="2293"/>
        <end position="2330"/>
    </location>
</feature>
<feature type="repeat" description="HEAT 39" evidence="1">
    <location>
        <begin position="2335"/>
        <end position="2373"/>
    </location>
</feature>
<feature type="repeat" description="HEAT 40" evidence="1">
    <location>
        <begin position="2377"/>
        <end position="2414"/>
    </location>
</feature>
<feature type="repeat" description="HEAT 41" evidence="1">
    <location>
        <begin position="2416"/>
        <end position="2450"/>
    </location>
</feature>
<feature type="repeat" description="HEAT 42" evidence="1">
    <location>
        <begin position="2455"/>
        <end position="2492"/>
    </location>
</feature>
<feature type="repeat" description="HEAT 43" evidence="1">
    <location>
        <begin position="2494"/>
        <end position="2530"/>
    </location>
</feature>
<feature type="repeat" description="HEAT 44" evidence="1">
    <location>
        <begin position="2536"/>
        <end position="2573"/>
    </location>
</feature>
<feature type="repeat" description="HEAT 45" evidence="1">
    <location>
        <begin position="2580"/>
        <end position="2617"/>
    </location>
</feature>
<feature type="repeat" description="HEAT 46" evidence="1">
    <location>
        <begin position="2620"/>
        <end position="2658"/>
    </location>
</feature>
<feature type="region of interest" description="Disordered" evidence="2">
    <location>
        <begin position="1"/>
        <end position="26"/>
    </location>
</feature>
<feature type="region of interest" description="Disordered" evidence="2">
    <location>
        <begin position="901"/>
        <end position="941"/>
    </location>
</feature>
<feature type="compositionally biased region" description="Polar residues" evidence="2">
    <location>
        <begin position="1"/>
        <end position="18"/>
    </location>
</feature>
<feature type="compositionally biased region" description="Basic and acidic residues" evidence="2">
    <location>
        <begin position="923"/>
        <end position="941"/>
    </location>
</feature>
<feature type="modified residue" description="Phosphoserine" evidence="13 14 15">
    <location>
        <position position="1887"/>
    </location>
</feature>
<feature type="splice variant" id="VSP_058640" description="In isoform 2.">
    <location>
        <begin position="1"/>
        <end position="119"/>
    </location>
</feature>
<feature type="splice variant" id="VSP_058641" description="In isoform 2.">
    <original>P</original>
    <variation>PILERILLSSKRTKLHDDVLQILYMHLDPMLPLPRLRMIS</variation>
    <location>
        <position position="1089"/>
    </location>
</feature>
<feature type="splice variant" id="VSP_058642" description="In isoform 2.">
    <location>
        <begin position="1569"/>
        <end position="1574"/>
    </location>
</feature>
<protein>
    <recommendedName>
        <fullName evidence="11">Protein ILITYHIA</fullName>
    </recommendedName>
</protein>